<sequence>MNFTEIAEKLKQNQVVAYPTEAVFGLGCNPLSESAVKKLLDLKQRPIDKGLILIAPDLLYLLPFIDTERLNSRQISRLTANYSHPVTWVVPVKFGTPKFLTGRFNSIAVRISDHPAVAELCSLTGFALTSTSANLSGLPPCKTAAEVRSQFGQFFPVLDYPVGHAEKPSEIRNLLTDQLIREG</sequence>
<organism>
    <name type="scientific">Actinobacillus succinogenes (strain ATCC 55618 / DSM 22257 / CCUG 43843 / 130Z)</name>
    <dbReference type="NCBI Taxonomy" id="339671"/>
    <lineage>
        <taxon>Bacteria</taxon>
        <taxon>Pseudomonadati</taxon>
        <taxon>Pseudomonadota</taxon>
        <taxon>Gammaproteobacteria</taxon>
        <taxon>Pasteurellales</taxon>
        <taxon>Pasteurellaceae</taxon>
        <taxon>Actinobacillus</taxon>
    </lineage>
</organism>
<comment type="function">
    <text evidence="1">Required for the formation of a threonylcarbamoyl group on adenosine at position 37 (t(6)A37) in tRNAs that read codons beginning with adenine. Catalyzes the conversion of L-threonine, HCO(3)(-)/CO(2) and ATP to give threonylcarbamoyl-AMP (TC-AMP) as the acyladenylate intermediate, with the release of diphosphate.</text>
</comment>
<comment type="catalytic activity">
    <reaction evidence="1">
        <text>L-threonine + hydrogencarbonate + ATP = L-threonylcarbamoyladenylate + diphosphate + H2O</text>
        <dbReference type="Rhea" id="RHEA:36407"/>
        <dbReference type="ChEBI" id="CHEBI:15377"/>
        <dbReference type="ChEBI" id="CHEBI:17544"/>
        <dbReference type="ChEBI" id="CHEBI:30616"/>
        <dbReference type="ChEBI" id="CHEBI:33019"/>
        <dbReference type="ChEBI" id="CHEBI:57926"/>
        <dbReference type="ChEBI" id="CHEBI:73682"/>
        <dbReference type="EC" id="2.7.7.87"/>
    </reaction>
</comment>
<comment type="subcellular location">
    <subcellularLocation>
        <location evidence="1">Cytoplasm</location>
    </subcellularLocation>
</comment>
<comment type="similarity">
    <text evidence="1">Belongs to the SUA5 family. TsaC subfamily.</text>
</comment>
<keyword id="KW-0067">ATP-binding</keyword>
<keyword id="KW-0963">Cytoplasm</keyword>
<keyword id="KW-0547">Nucleotide-binding</keyword>
<keyword id="KW-0548">Nucleotidyltransferase</keyword>
<keyword id="KW-1185">Reference proteome</keyword>
<keyword id="KW-0808">Transferase</keyword>
<keyword id="KW-0819">tRNA processing</keyword>
<accession>A6VL69</accession>
<protein>
    <recommendedName>
        <fullName evidence="1">Threonylcarbamoyl-AMP synthase</fullName>
        <shortName evidence="1">TC-AMP synthase</shortName>
        <ecNumber evidence="1">2.7.7.87</ecNumber>
    </recommendedName>
    <alternativeName>
        <fullName evidence="1">L-threonylcarbamoyladenylate synthase</fullName>
    </alternativeName>
    <alternativeName>
        <fullName evidence="1">t(6)A37 threonylcarbamoyladenosine biosynthesis protein TsaC</fullName>
    </alternativeName>
    <alternativeName>
        <fullName evidence="1">tRNA threonylcarbamoyladenosine biosynthesis protein TsaC</fullName>
    </alternativeName>
</protein>
<evidence type="ECO:0000255" key="1">
    <source>
        <dbReference type="HAMAP-Rule" id="MF_01852"/>
    </source>
</evidence>
<gene>
    <name evidence="1" type="primary">tsaC</name>
    <name type="synonym">rimN</name>
    <name type="ordered locus">Asuc_0338</name>
</gene>
<feature type="chain" id="PRO_0000352894" description="Threonylcarbamoyl-AMP synthase">
    <location>
        <begin position="1"/>
        <end position="183"/>
    </location>
</feature>
<feature type="domain" description="YrdC-like" evidence="1">
    <location>
        <begin position="1"/>
        <end position="183"/>
    </location>
</feature>
<proteinExistence type="inferred from homology"/>
<reference key="1">
    <citation type="journal article" date="2010" name="BMC Genomics">
        <title>A genomic perspective on the potential of Actinobacillus succinogenes for industrial succinate production.</title>
        <authorList>
            <person name="McKinlay J.B."/>
            <person name="Laivenieks M."/>
            <person name="Schindler B.D."/>
            <person name="McKinlay A.A."/>
            <person name="Siddaramappa S."/>
            <person name="Challacombe J.F."/>
            <person name="Lowry S.R."/>
            <person name="Clum A."/>
            <person name="Lapidus A.L."/>
            <person name="Burkhart K.B."/>
            <person name="Harkins V."/>
            <person name="Vieille C."/>
        </authorList>
    </citation>
    <scope>NUCLEOTIDE SEQUENCE [LARGE SCALE GENOMIC DNA]</scope>
    <source>
        <strain>ATCC 55618 / DSM 22257 / CCUG 43843 / 130Z</strain>
    </source>
</reference>
<name>TSAC_ACTSZ</name>
<dbReference type="EC" id="2.7.7.87" evidence="1"/>
<dbReference type="EMBL" id="CP000746">
    <property type="protein sequence ID" value="ABR73716.1"/>
    <property type="molecule type" value="Genomic_DNA"/>
</dbReference>
<dbReference type="RefSeq" id="WP_011978991.1">
    <property type="nucleotide sequence ID" value="NC_009655.1"/>
</dbReference>
<dbReference type="SMR" id="A6VL69"/>
<dbReference type="STRING" id="339671.Asuc_0338"/>
<dbReference type="KEGG" id="asu:Asuc_0338"/>
<dbReference type="eggNOG" id="COG0009">
    <property type="taxonomic scope" value="Bacteria"/>
</dbReference>
<dbReference type="HOGENOM" id="CLU_031397_6_0_6"/>
<dbReference type="OrthoDB" id="9814580at2"/>
<dbReference type="Proteomes" id="UP000001114">
    <property type="component" value="Chromosome"/>
</dbReference>
<dbReference type="GO" id="GO:0005737">
    <property type="term" value="C:cytoplasm"/>
    <property type="evidence" value="ECO:0007669"/>
    <property type="project" value="UniProtKB-SubCell"/>
</dbReference>
<dbReference type="GO" id="GO:0005524">
    <property type="term" value="F:ATP binding"/>
    <property type="evidence" value="ECO:0007669"/>
    <property type="project" value="UniProtKB-UniRule"/>
</dbReference>
<dbReference type="GO" id="GO:0003725">
    <property type="term" value="F:double-stranded RNA binding"/>
    <property type="evidence" value="ECO:0007669"/>
    <property type="project" value="InterPro"/>
</dbReference>
<dbReference type="GO" id="GO:0061710">
    <property type="term" value="F:L-threonylcarbamoyladenylate synthase"/>
    <property type="evidence" value="ECO:0007669"/>
    <property type="project" value="UniProtKB-EC"/>
</dbReference>
<dbReference type="GO" id="GO:0000049">
    <property type="term" value="F:tRNA binding"/>
    <property type="evidence" value="ECO:0007669"/>
    <property type="project" value="TreeGrafter"/>
</dbReference>
<dbReference type="GO" id="GO:0006450">
    <property type="term" value="P:regulation of translational fidelity"/>
    <property type="evidence" value="ECO:0007669"/>
    <property type="project" value="TreeGrafter"/>
</dbReference>
<dbReference type="GO" id="GO:0002949">
    <property type="term" value="P:tRNA threonylcarbamoyladenosine modification"/>
    <property type="evidence" value="ECO:0007669"/>
    <property type="project" value="UniProtKB-UniRule"/>
</dbReference>
<dbReference type="FunFam" id="3.90.870.10:FF:000004">
    <property type="entry name" value="Threonylcarbamoyl-AMP synthase"/>
    <property type="match status" value="1"/>
</dbReference>
<dbReference type="Gene3D" id="3.90.870.10">
    <property type="entry name" value="DHBP synthase"/>
    <property type="match status" value="1"/>
</dbReference>
<dbReference type="HAMAP" id="MF_01852">
    <property type="entry name" value="TsaC"/>
    <property type="match status" value="1"/>
</dbReference>
<dbReference type="InterPro" id="IPR017945">
    <property type="entry name" value="DHBP_synth_RibB-like_a/b_dom"/>
</dbReference>
<dbReference type="InterPro" id="IPR006070">
    <property type="entry name" value="Sua5-like_dom"/>
</dbReference>
<dbReference type="InterPro" id="IPR023535">
    <property type="entry name" value="TC-AMP_synthase"/>
</dbReference>
<dbReference type="InterPro" id="IPR050156">
    <property type="entry name" value="TC-AMP_synthase_SUA5"/>
</dbReference>
<dbReference type="PANTHER" id="PTHR17490">
    <property type="entry name" value="SUA5"/>
    <property type="match status" value="1"/>
</dbReference>
<dbReference type="PANTHER" id="PTHR17490:SF18">
    <property type="entry name" value="THREONYLCARBAMOYL-AMP SYNTHASE"/>
    <property type="match status" value="1"/>
</dbReference>
<dbReference type="Pfam" id="PF01300">
    <property type="entry name" value="Sua5_yciO_yrdC"/>
    <property type="match status" value="1"/>
</dbReference>
<dbReference type="SUPFAM" id="SSF55821">
    <property type="entry name" value="YrdC/RibB"/>
    <property type="match status" value="1"/>
</dbReference>
<dbReference type="PROSITE" id="PS51163">
    <property type="entry name" value="YRDC"/>
    <property type="match status" value="1"/>
</dbReference>